<proteinExistence type="inferred from homology"/>
<name>RNPA_STAA2</name>
<keyword id="KW-0255">Endonuclease</keyword>
<keyword id="KW-0378">Hydrolase</keyword>
<keyword id="KW-0540">Nuclease</keyword>
<keyword id="KW-0694">RNA-binding</keyword>
<keyword id="KW-0819">tRNA processing</keyword>
<organism>
    <name type="scientific">Staphylococcus aureus (strain JH1)</name>
    <dbReference type="NCBI Taxonomy" id="359787"/>
    <lineage>
        <taxon>Bacteria</taxon>
        <taxon>Bacillati</taxon>
        <taxon>Bacillota</taxon>
        <taxon>Bacilli</taxon>
        <taxon>Bacillales</taxon>
        <taxon>Staphylococcaceae</taxon>
        <taxon>Staphylococcus</taxon>
    </lineage>
</organism>
<protein>
    <recommendedName>
        <fullName evidence="1">Ribonuclease P protein component</fullName>
        <shortName evidence="1">RNase P protein</shortName>
        <shortName evidence="1">RNaseP protein</shortName>
        <ecNumber evidence="1">3.1.26.5</ecNumber>
    </recommendedName>
    <alternativeName>
        <fullName evidence="1">Protein C5</fullName>
    </alternativeName>
</protein>
<gene>
    <name evidence="1" type="primary">rnpA</name>
    <name type="ordered locus">SaurJH1_2792</name>
</gene>
<feature type="chain" id="PRO_1000078209" description="Ribonuclease P protein component">
    <location>
        <begin position="1"/>
        <end position="117"/>
    </location>
</feature>
<comment type="function">
    <text evidence="1">RNaseP catalyzes the removal of the 5'-leader sequence from pre-tRNA to produce the mature 5'-terminus. It can also cleave other RNA substrates such as 4.5S RNA. The protein component plays an auxiliary but essential role in vivo by binding to the 5'-leader sequence and broadening the substrate specificity of the ribozyme.</text>
</comment>
<comment type="catalytic activity">
    <reaction evidence="1">
        <text>Endonucleolytic cleavage of RNA, removing 5'-extranucleotides from tRNA precursor.</text>
        <dbReference type="EC" id="3.1.26.5"/>
    </reaction>
</comment>
<comment type="subunit">
    <text evidence="1">Consists of a catalytic RNA component (M1 or rnpB) and a protein subunit.</text>
</comment>
<comment type="similarity">
    <text evidence="1">Belongs to the RnpA family.</text>
</comment>
<reference key="1">
    <citation type="submission" date="2007-06" db="EMBL/GenBank/DDBJ databases">
        <title>Complete sequence of chromosome of Staphylococcus aureus subsp. aureus JH1.</title>
        <authorList>
            <consortium name="US DOE Joint Genome Institute"/>
            <person name="Copeland A."/>
            <person name="Lucas S."/>
            <person name="Lapidus A."/>
            <person name="Barry K."/>
            <person name="Detter J.C."/>
            <person name="Glavina del Rio T."/>
            <person name="Hammon N."/>
            <person name="Israni S."/>
            <person name="Dalin E."/>
            <person name="Tice H."/>
            <person name="Pitluck S."/>
            <person name="Chain P."/>
            <person name="Malfatti S."/>
            <person name="Shin M."/>
            <person name="Vergez L."/>
            <person name="Schmutz J."/>
            <person name="Larimer F."/>
            <person name="Land M."/>
            <person name="Hauser L."/>
            <person name="Kyrpides N."/>
            <person name="Ivanova N."/>
            <person name="Tomasz A."/>
            <person name="Richardson P."/>
        </authorList>
    </citation>
    <scope>NUCLEOTIDE SEQUENCE [LARGE SCALE GENOMIC DNA]</scope>
    <source>
        <strain>JH1</strain>
    </source>
</reference>
<dbReference type="EC" id="3.1.26.5" evidence="1"/>
<dbReference type="EMBL" id="CP000736">
    <property type="protein sequence ID" value="ABR53614.1"/>
    <property type="molecule type" value="Genomic_DNA"/>
</dbReference>
<dbReference type="SMR" id="A6U596"/>
<dbReference type="KEGG" id="sah:SaurJH1_2792"/>
<dbReference type="HOGENOM" id="CLU_117179_9_1_9"/>
<dbReference type="GO" id="GO:0030677">
    <property type="term" value="C:ribonuclease P complex"/>
    <property type="evidence" value="ECO:0007669"/>
    <property type="project" value="TreeGrafter"/>
</dbReference>
<dbReference type="GO" id="GO:0042781">
    <property type="term" value="F:3'-tRNA processing endoribonuclease activity"/>
    <property type="evidence" value="ECO:0007669"/>
    <property type="project" value="TreeGrafter"/>
</dbReference>
<dbReference type="GO" id="GO:0004526">
    <property type="term" value="F:ribonuclease P activity"/>
    <property type="evidence" value="ECO:0007669"/>
    <property type="project" value="UniProtKB-UniRule"/>
</dbReference>
<dbReference type="GO" id="GO:0000049">
    <property type="term" value="F:tRNA binding"/>
    <property type="evidence" value="ECO:0007669"/>
    <property type="project" value="UniProtKB-UniRule"/>
</dbReference>
<dbReference type="GO" id="GO:0001682">
    <property type="term" value="P:tRNA 5'-leader removal"/>
    <property type="evidence" value="ECO:0007669"/>
    <property type="project" value="UniProtKB-UniRule"/>
</dbReference>
<dbReference type="FunFam" id="3.30.230.10:FF:000021">
    <property type="entry name" value="Ribonuclease P protein component"/>
    <property type="match status" value="1"/>
</dbReference>
<dbReference type="Gene3D" id="3.30.230.10">
    <property type="match status" value="1"/>
</dbReference>
<dbReference type="HAMAP" id="MF_00227">
    <property type="entry name" value="RNase_P"/>
    <property type="match status" value="1"/>
</dbReference>
<dbReference type="InterPro" id="IPR020568">
    <property type="entry name" value="Ribosomal_Su5_D2-typ_SF"/>
</dbReference>
<dbReference type="InterPro" id="IPR014721">
    <property type="entry name" value="Ribsml_uS5_D2-typ_fold_subgr"/>
</dbReference>
<dbReference type="InterPro" id="IPR000100">
    <property type="entry name" value="RNase_P"/>
</dbReference>
<dbReference type="InterPro" id="IPR020539">
    <property type="entry name" value="RNase_P_CS"/>
</dbReference>
<dbReference type="NCBIfam" id="TIGR00188">
    <property type="entry name" value="rnpA"/>
    <property type="match status" value="1"/>
</dbReference>
<dbReference type="PANTHER" id="PTHR33992">
    <property type="entry name" value="RIBONUCLEASE P PROTEIN COMPONENT"/>
    <property type="match status" value="1"/>
</dbReference>
<dbReference type="PANTHER" id="PTHR33992:SF1">
    <property type="entry name" value="RIBONUCLEASE P PROTEIN COMPONENT"/>
    <property type="match status" value="1"/>
</dbReference>
<dbReference type="Pfam" id="PF00825">
    <property type="entry name" value="Ribonuclease_P"/>
    <property type="match status" value="1"/>
</dbReference>
<dbReference type="SUPFAM" id="SSF54211">
    <property type="entry name" value="Ribosomal protein S5 domain 2-like"/>
    <property type="match status" value="1"/>
</dbReference>
<dbReference type="PROSITE" id="PS00648">
    <property type="entry name" value="RIBONUCLEASE_P"/>
    <property type="match status" value="1"/>
</dbReference>
<accession>A6U596</accession>
<sequence length="117" mass="13652">MLLEKAYRIKKNADFQRIYKKGHSVANRQFVVYTCNNKEIDHFRLGISVSKKLGNAVLRNKIKRAIRENFKVHKSHILAKDIIVIARQPAKDMTTLQIQNSLEHVLKIAKVFNKKIK</sequence>
<evidence type="ECO:0000255" key="1">
    <source>
        <dbReference type="HAMAP-Rule" id="MF_00227"/>
    </source>
</evidence>